<name>FGL1_MESAU</name>
<keyword id="KW-1064">Adaptive immunity</keyword>
<keyword id="KW-0175">Coiled coil</keyword>
<keyword id="KW-1015">Disulfide bond</keyword>
<keyword id="KW-0391">Immunity</keyword>
<keyword id="KW-1185">Reference proteome</keyword>
<keyword id="KW-0964">Secreted</keyword>
<keyword id="KW-0732">Signal</keyword>
<proteinExistence type="evidence at protein level"/>
<comment type="function">
    <text evidence="1">Immune suppressive molecule that inhibits antigen-specific T-cell activation by acting as a major ligand of LAG3. Responsible for LAG3 T-cell inhibitory function. Binds LAG3 independently from MHC class II (MHC-II). Secreted by, and promotes growth of, hepatocytes.</text>
</comment>
<comment type="subunit">
    <text evidence="1">Homodimer. Interacts (via the Fibrinogen C-terminal domain) with LAG3 (via Ig-like domains 1 and 2).</text>
</comment>
<comment type="subcellular location">
    <subcellularLocation>
        <location evidence="1">Secreted</location>
    </subcellularLocation>
    <text evidence="1">Secreted in the blood plasma.</text>
</comment>
<gene>
    <name evidence="1" type="primary">FGL1</name>
</gene>
<feature type="signal peptide" evidence="1">
    <location>
        <begin position="1"/>
        <end position="22"/>
    </location>
</feature>
<feature type="chain" id="PRO_0000394415" description="Fibrinogen-like protein 1" evidence="2">
    <location>
        <begin position="23"/>
        <end position="314"/>
    </location>
</feature>
<feature type="domain" description="Fibrinogen C-terminal" evidence="3">
    <location>
        <begin position="76"/>
        <end position="308"/>
    </location>
</feature>
<feature type="coiled-coil region" evidence="2">
    <location>
        <begin position="25"/>
        <end position="59"/>
    </location>
</feature>
<feature type="disulfide bond" evidence="3">
    <location>
        <begin position="85"/>
        <end position="114"/>
    </location>
</feature>
<feature type="disulfide bond" evidence="3">
    <location>
        <begin position="250"/>
        <end position="263"/>
    </location>
</feature>
<evidence type="ECO:0000250" key="1">
    <source>
        <dbReference type="UniProtKB" id="Q08830"/>
    </source>
</evidence>
<evidence type="ECO:0000255" key="2"/>
<evidence type="ECO:0000255" key="3">
    <source>
        <dbReference type="PROSITE-ProRule" id="PRU00739"/>
    </source>
</evidence>
<accession>P86239</accession>
<accession>A0A1U7Q3U4</accession>
<dbReference type="RefSeq" id="XP_005066704.1">
    <property type="nucleotide sequence ID" value="XM_005066647.2"/>
</dbReference>
<dbReference type="SMR" id="P86239"/>
<dbReference type="STRING" id="10036.ENSMAUP00000017672"/>
<dbReference type="GeneID" id="101840333"/>
<dbReference type="KEGG" id="maua:101840333"/>
<dbReference type="CTD" id="2267"/>
<dbReference type="eggNOG" id="KOG2579">
    <property type="taxonomic scope" value="Eukaryota"/>
</dbReference>
<dbReference type="OrthoDB" id="7725475at2759"/>
<dbReference type="Proteomes" id="UP000189706">
    <property type="component" value="Unplaced"/>
</dbReference>
<dbReference type="GO" id="GO:0005576">
    <property type="term" value="C:extracellular region"/>
    <property type="evidence" value="ECO:0000250"/>
    <property type="project" value="UniProtKB"/>
</dbReference>
<dbReference type="GO" id="GO:0005577">
    <property type="term" value="C:fibrinogen complex"/>
    <property type="evidence" value="ECO:0007669"/>
    <property type="project" value="TreeGrafter"/>
</dbReference>
<dbReference type="GO" id="GO:0005201">
    <property type="term" value="F:extracellular matrix structural constituent"/>
    <property type="evidence" value="ECO:0007669"/>
    <property type="project" value="TreeGrafter"/>
</dbReference>
<dbReference type="GO" id="GO:0030674">
    <property type="term" value="F:protein-macromolecule adaptor activity"/>
    <property type="evidence" value="ECO:0007669"/>
    <property type="project" value="TreeGrafter"/>
</dbReference>
<dbReference type="GO" id="GO:0002250">
    <property type="term" value="P:adaptive immune response"/>
    <property type="evidence" value="ECO:0007669"/>
    <property type="project" value="UniProtKB-KW"/>
</dbReference>
<dbReference type="GO" id="GO:0072377">
    <property type="term" value="P:blood coagulation, common pathway"/>
    <property type="evidence" value="ECO:0007669"/>
    <property type="project" value="TreeGrafter"/>
</dbReference>
<dbReference type="GO" id="GO:0042730">
    <property type="term" value="P:fibrinolysis"/>
    <property type="evidence" value="ECO:0007669"/>
    <property type="project" value="TreeGrafter"/>
</dbReference>
<dbReference type="GO" id="GO:0072574">
    <property type="term" value="P:hepatocyte proliferation"/>
    <property type="evidence" value="ECO:0000250"/>
    <property type="project" value="UniProtKB"/>
</dbReference>
<dbReference type="GO" id="GO:0050868">
    <property type="term" value="P:negative regulation of T cell activation"/>
    <property type="evidence" value="ECO:0000250"/>
    <property type="project" value="UniProtKB"/>
</dbReference>
<dbReference type="GO" id="GO:0070527">
    <property type="term" value="P:platelet aggregation"/>
    <property type="evidence" value="ECO:0007669"/>
    <property type="project" value="TreeGrafter"/>
</dbReference>
<dbReference type="GO" id="GO:0034116">
    <property type="term" value="P:positive regulation of heterotypic cell-cell adhesion"/>
    <property type="evidence" value="ECO:0007669"/>
    <property type="project" value="TreeGrafter"/>
</dbReference>
<dbReference type="GO" id="GO:0050776">
    <property type="term" value="P:regulation of immune response"/>
    <property type="evidence" value="ECO:0000250"/>
    <property type="project" value="UniProtKB"/>
</dbReference>
<dbReference type="CDD" id="cd14686">
    <property type="entry name" value="bZIP"/>
    <property type="match status" value="1"/>
</dbReference>
<dbReference type="CDD" id="cd00087">
    <property type="entry name" value="FReD"/>
    <property type="match status" value="1"/>
</dbReference>
<dbReference type="FunFam" id="3.90.215.10:FF:000013">
    <property type="entry name" value="Fibrinogen-like protein 1"/>
    <property type="match status" value="1"/>
</dbReference>
<dbReference type="Gene3D" id="3.90.215.10">
    <property type="entry name" value="Gamma Fibrinogen, chain A, domain 1"/>
    <property type="match status" value="1"/>
</dbReference>
<dbReference type="Gene3D" id="4.10.530.10">
    <property type="entry name" value="Gamma-fibrinogen Carboxyl Terminal Fragment, domain 2"/>
    <property type="match status" value="1"/>
</dbReference>
<dbReference type="InterPro" id="IPR037579">
    <property type="entry name" value="FIB_ANG-like"/>
</dbReference>
<dbReference type="InterPro" id="IPR036056">
    <property type="entry name" value="Fibrinogen-like_C"/>
</dbReference>
<dbReference type="InterPro" id="IPR014716">
    <property type="entry name" value="Fibrinogen_a/b/g_C_1"/>
</dbReference>
<dbReference type="InterPro" id="IPR002181">
    <property type="entry name" value="Fibrinogen_a/b/g_C_dom"/>
</dbReference>
<dbReference type="InterPro" id="IPR020837">
    <property type="entry name" value="Fibrinogen_CS"/>
</dbReference>
<dbReference type="NCBIfam" id="NF040941">
    <property type="entry name" value="GGGWT_bact"/>
    <property type="match status" value="1"/>
</dbReference>
<dbReference type="PANTHER" id="PTHR47221">
    <property type="entry name" value="FIBRINOGEN ALPHA CHAIN"/>
    <property type="match status" value="1"/>
</dbReference>
<dbReference type="PANTHER" id="PTHR47221:SF8">
    <property type="entry name" value="FIBRINOGEN LIKE 1A"/>
    <property type="match status" value="1"/>
</dbReference>
<dbReference type="Pfam" id="PF00147">
    <property type="entry name" value="Fibrinogen_C"/>
    <property type="match status" value="1"/>
</dbReference>
<dbReference type="SMART" id="SM00186">
    <property type="entry name" value="FBG"/>
    <property type="match status" value="1"/>
</dbReference>
<dbReference type="SUPFAM" id="SSF56496">
    <property type="entry name" value="Fibrinogen C-terminal domain-like"/>
    <property type="match status" value="1"/>
</dbReference>
<dbReference type="PROSITE" id="PS00514">
    <property type="entry name" value="FIBRINOGEN_C_1"/>
    <property type="match status" value="1"/>
</dbReference>
<dbReference type="PROSITE" id="PS51406">
    <property type="entry name" value="FIBRINOGEN_C_2"/>
    <property type="match status" value="1"/>
</dbReference>
<sequence>MGEIRSFLLVTIALMMGREIWALENSKCLLEQERLRAQVQQLETRVKQQQARIAQLMHEKEVQLLDKGQEDNFFDLGGKRQYADCSEIYNDGFKQSGFYKIKPHQSQAIFSVYCDMSDGGGWTVIQRRSDGRENFNRCWNDYENGFGNFVQNNGEYWLGNKNINLLTMQGDYTLKIDLTDFEKNSRFAQYKHFKVGDKKSFYELNFGEYSGTAGDSLSGTYHPEMQWWASHQRMKFSTRDRDNDNYKGNCAEEEQSGWWFNRCHSANLNGVYYQGPYTAETDNGVVWYTWHGWWYSLKSVVMKIRPNDFIPNVI</sequence>
<reference key="1">
    <citation type="journal article" date="2010" name="Asian J. Androl.">
        <title>Glucose-regulated protein precursor (GRP78) and tumor rejection antigen (GP96) are unique to hamster caput epididymal spermatozoa.</title>
        <authorList>
            <person name="Kameshwari D.B."/>
            <person name="Bhande S."/>
            <person name="Sundaram C.S."/>
            <person name="Kota V."/>
            <person name="Siva A.B."/>
            <person name="Shivaji S."/>
        </authorList>
    </citation>
    <scope>IDENTIFICATION BY MASS SPECTROMETRY</scope>
</reference>
<protein>
    <recommendedName>
        <fullName evidence="1">Fibrinogen-like protein 1</fullName>
    </recommendedName>
</protein>
<organism>
    <name type="scientific">Mesocricetus auratus</name>
    <name type="common">Golden hamster</name>
    <dbReference type="NCBI Taxonomy" id="10036"/>
    <lineage>
        <taxon>Eukaryota</taxon>
        <taxon>Metazoa</taxon>
        <taxon>Chordata</taxon>
        <taxon>Craniata</taxon>
        <taxon>Vertebrata</taxon>
        <taxon>Euteleostomi</taxon>
        <taxon>Mammalia</taxon>
        <taxon>Eutheria</taxon>
        <taxon>Euarchontoglires</taxon>
        <taxon>Glires</taxon>
        <taxon>Rodentia</taxon>
        <taxon>Myomorpha</taxon>
        <taxon>Muroidea</taxon>
        <taxon>Cricetidae</taxon>
        <taxon>Cricetinae</taxon>
        <taxon>Mesocricetus</taxon>
    </lineage>
</organism>